<accession>Q2NUV7</accession>
<protein>
    <recommendedName>
        <fullName evidence="1">Octanoyltransferase</fullName>
        <ecNumber evidence="1">2.3.1.181</ecNumber>
    </recommendedName>
    <alternativeName>
        <fullName evidence="1">Lipoate-protein ligase B</fullName>
    </alternativeName>
    <alternativeName>
        <fullName evidence="1">Lipoyl/octanoyl transferase</fullName>
    </alternativeName>
    <alternativeName>
        <fullName evidence="1">Octanoyl-[acyl-carrier-protein]-protein N-octanoyltransferase</fullName>
    </alternativeName>
</protein>
<name>LIPB_SODGM</name>
<evidence type="ECO:0000255" key="1">
    <source>
        <dbReference type="HAMAP-Rule" id="MF_00013"/>
    </source>
</evidence>
<evidence type="ECO:0000255" key="2">
    <source>
        <dbReference type="PROSITE-ProRule" id="PRU01067"/>
    </source>
</evidence>
<gene>
    <name evidence="1" type="primary">lipB</name>
    <name type="ordered locus">SG0793</name>
</gene>
<proteinExistence type="inferred from homology"/>
<reference key="1">
    <citation type="journal article" date="2006" name="Genome Res.">
        <title>Massive genome erosion and functional adaptations provide insights into the symbiotic lifestyle of Sodalis glossinidius in the tsetse host.</title>
        <authorList>
            <person name="Toh H."/>
            <person name="Weiss B.L."/>
            <person name="Perkin S.A.H."/>
            <person name="Yamashita A."/>
            <person name="Oshima K."/>
            <person name="Hattori M."/>
            <person name="Aksoy S."/>
        </authorList>
    </citation>
    <scope>NUCLEOTIDE SEQUENCE [LARGE SCALE GENOMIC DNA]</scope>
    <source>
        <strain>morsitans</strain>
    </source>
</reference>
<keyword id="KW-0012">Acyltransferase</keyword>
<keyword id="KW-0963">Cytoplasm</keyword>
<keyword id="KW-0808">Transferase</keyword>
<comment type="function">
    <text evidence="1">Catalyzes the transfer of endogenously produced octanoic acid from octanoyl-acyl-carrier-protein onto the lipoyl domains of lipoate-dependent enzymes. Lipoyl-ACP can also act as a substrate although octanoyl-ACP is likely to be the physiological substrate.</text>
</comment>
<comment type="catalytic activity">
    <reaction evidence="1">
        <text>octanoyl-[ACP] + L-lysyl-[protein] = N(6)-octanoyl-L-lysyl-[protein] + holo-[ACP] + H(+)</text>
        <dbReference type="Rhea" id="RHEA:17665"/>
        <dbReference type="Rhea" id="RHEA-COMP:9636"/>
        <dbReference type="Rhea" id="RHEA-COMP:9685"/>
        <dbReference type="Rhea" id="RHEA-COMP:9752"/>
        <dbReference type="Rhea" id="RHEA-COMP:9928"/>
        <dbReference type="ChEBI" id="CHEBI:15378"/>
        <dbReference type="ChEBI" id="CHEBI:29969"/>
        <dbReference type="ChEBI" id="CHEBI:64479"/>
        <dbReference type="ChEBI" id="CHEBI:78463"/>
        <dbReference type="ChEBI" id="CHEBI:78809"/>
        <dbReference type="EC" id="2.3.1.181"/>
    </reaction>
</comment>
<comment type="pathway">
    <text evidence="1">Protein modification; protein lipoylation via endogenous pathway; protein N(6)-(lipoyl)lysine from octanoyl-[acyl-carrier-protein]: step 1/2.</text>
</comment>
<comment type="subcellular location">
    <subcellularLocation>
        <location evidence="1">Cytoplasm</location>
    </subcellularLocation>
</comment>
<comment type="miscellaneous">
    <text evidence="1">In the reaction, the free carboxyl group of octanoic acid is attached via an amide linkage to the epsilon-amino group of a specific lysine residue of lipoyl domains of lipoate-dependent enzymes.</text>
</comment>
<comment type="similarity">
    <text evidence="1">Belongs to the LipB family.</text>
</comment>
<feature type="chain" id="PRO_0000242769" description="Octanoyltransferase">
    <location>
        <begin position="1"/>
        <end position="219"/>
    </location>
</feature>
<feature type="domain" description="BPL/LPL catalytic" evidence="2">
    <location>
        <begin position="31"/>
        <end position="206"/>
    </location>
</feature>
<feature type="active site" description="Acyl-thioester intermediate" evidence="1">
    <location>
        <position position="168"/>
    </location>
</feature>
<feature type="binding site" evidence="1">
    <location>
        <begin position="70"/>
        <end position="77"/>
    </location>
    <ligand>
        <name>substrate</name>
    </ligand>
</feature>
<feature type="binding site" evidence="1">
    <location>
        <begin position="137"/>
        <end position="139"/>
    </location>
    <ligand>
        <name>substrate</name>
    </ligand>
</feature>
<feature type="binding site" evidence="1">
    <location>
        <begin position="150"/>
        <end position="152"/>
    </location>
    <ligand>
        <name>substrate</name>
    </ligand>
</feature>
<feature type="site" description="Lowers pKa of active site Cys" evidence="1">
    <location>
        <position position="134"/>
    </location>
</feature>
<dbReference type="EC" id="2.3.1.181" evidence="1"/>
<dbReference type="EMBL" id="AP008232">
    <property type="protein sequence ID" value="BAE74068.1"/>
    <property type="molecule type" value="Genomic_DNA"/>
</dbReference>
<dbReference type="RefSeq" id="WP_011410656.1">
    <property type="nucleotide sequence ID" value="NC_007712.1"/>
</dbReference>
<dbReference type="SMR" id="Q2NUV7"/>
<dbReference type="STRING" id="343509.SG0793"/>
<dbReference type="KEGG" id="sgl:SG0793"/>
<dbReference type="eggNOG" id="COG0321">
    <property type="taxonomic scope" value="Bacteria"/>
</dbReference>
<dbReference type="HOGENOM" id="CLU_035168_3_1_6"/>
<dbReference type="OrthoDB" id="9787061at2"/>
<dbReference type="BioCyc" id="SGLO343509:SGP1_RS07005-MONOMER"/>
<dbReference type="UniPathway" id="UPA00538">
    <property type="reaction ID" value="UER00592"/>
</dbReference>
<dbReference type="Proteomes" id="UP000001932">
    <property type="component" value="Chromosome"/>
</dbReference>
<dbReference type="GO" id="GO:0005737">
    <property type="term" value="C:cytoplasm"/>
    <property type="evidence" value="ECO:0007669"/>
    <property type="project" value="UniProtKB-SubCell"/>
</dbReference>
<dbReference type="GO" id="GO:0033819">
    <property type="term" value="F:lipoyl(octanoyl) transferase activity"/>
    <property type="evidence" value="ECO:0007669"/>
    <property type="project" value="UniProtKB-EC"/>
</dbReference>
<dbReference type="GO" id="GO:0036211">
    <property type="term" value="P:protein modification process"/>
    <property type="evidence" value="ECO:0007669"/>
    <property type="project" value="InterPro"/>
</dbReference>
<dbReference type="CDD" id="cd16444">
    <property type="entry name" value="LipB"/>
    <property type="match status" value="1"/>
</dbReference>
<dbReference type="FunFam" id="3.30.930.10:FF:000020">
    <property type="entry name" value="Octanoyltransferase"/>
    <property type="match status" value="1"/>
</dbReference>
<dbReference type="Gene3D" id="3.30.930.10">
    <property type="entry name" value="Bira Bifunctional Protein, Domain 2"/>
    <property type="match status" value="1"/>
</dbReference>
<dbReference type="HAMAP" id="MF_00013">
    <property type="entry name" value="LipB"/>
    <property type="match status" value="1"/>
</dbReference>
<dbReference type="InterPro" id="IPR045864">
    <property type="entry name" value="aa-tRNA-synth_II/BPL/LPL"/>
</dbReference>
<dbReference type="InterPro" id="IPR004143">
    <property type="entry name" value="BPL_LPL_catalytic"/>
</dbReference>
<dbReference type="InterPro" id="IPR000544">
    <property type="entry name" value="Octanoyltransferase"/>
</dbReference>
<dbReference type="InterPro" id="IPR020605">
    <property type="entry name" value="Octanoyltransferase_CS"/>
</dbReference>
<dbReference type="NCBIfam" id="TIGR00214">
    <property type="entry name" value="lipB"/>
    <property type="match status" value="1"/>
</dbReference>
<dbReference type="NCBIfam" id="NF010922">
    <property type="entry name" value="PRK14342.1"/>
    <property type="match status" value="1"/>
</dbReference>
<dbReference type="PANTHER" id="PTHR10993:SF7">
    <property type="entry name" value="LIPOYLTRANSFERASE 2, MITOCHONDRIAL-RELATED"/>
    <property type="match status" value="1"/>
</dbReference>
<dbReference type="PANTHER" id="PTHR10993">
    <property type="entry name" value="OCTANOYLTRANSFERASE"/>
    <property type="match status" value="1"/>
</dbReference>
<dbReference type="Pfam" id="PF21948">
    <property type="entry name" value="LplA-B_cat"/>
    <property type="match status" value="1"/>
</dbReference>
<dbReference type="PIRSF" id="PIRSF016262">
    <property type="entry name" value="LPLase"/>
    <property type="match status" value="1"/>
</dbReference>
<dbReference type="SUPFAM" id="SSF55681">
    <property type="entry name" value="Class II aaRS and biotin synthetases"/>
    <property type="match status" value="1"/>
</dbReference>
<dbReference type="PROSITE" id="PS51733">
    <property type="entry name" value="BPL_LPL_CATALYTIC"/>
    <property type="match status" value="1"/>
</dbReference>
<dbReference type="PROSITE" id="PS01313">
    <property type="entry name" value="LIPB"/>
    <property type="match status" value="1"/>
</dbReference>
<sequence length="219" mass="23762">MSESLVIRQLGLQPYERVSFAMHRFTDARSTASADEIWLVQHPQVFTQGQAGKAEHLLQPGAIPVVQSDRGGQVTFHGPGQQVMYVLLDLRRRRLGVRSLVTLLEQTIVATLACFSISAHARTDAPGVYIGADKICSLGLRIRKGCSFHGLALNVAMDLSPFLRINPCGYAGLRMTQVSDLAPGTGIDDVAPVLLAECLRLMKASAGEIQGWDPAYYGT</sequence>
<organism>
    <name type="scientific">Sodalis glossinidius (strain morsitans)</name>
    <dbReference type="NCBI Taxonomy" id="343509"/>
    <lineage>
        <taxon>Bacteria</taxon>
        <taxon>Pseudomonadati</taxon>
        <taxon>Pseudomonadota</taxon>
        <taxon>Gammaproteobacteria</taxon>
        <taxon>Enterobacterales</taxon>
        <taxon>Bruguierivoracaceae</taxon>
        <taxon>Sodalis</taxon>
    </lineage>
</organism>